<dbReference type="EMBL" id="AY515566">
    <property type="protein sequence ID" value="AAS00697.1"/>
    <property type="molecule type" value="mRNA"/>
</dbReference>
<dbReference type="EMBL" id="AC007932">
    <property type="protein sequence ID" value="AAD49762.2"/>
    <property type="status" value="ALT_SEQ"/>
    <property type="molecule type" value="Genomic_DNA"/>
</dbReference>
<dbReference type="EMBL" id="CP002684">
    <property type="protein sequence ID" value="AEE32281.1"/>
    <property type="molecule type" value="Genomic_DNA"/>
</dbReference>
<dbReference type="EMBL" id="AY039600">
    <property type="protein sequence ID" value="AAK62655.1"/>
    <property type="molecule type" value="mRNA"/>
</dbReference>
<dbReference type="EMBL" id="BT010472">
    <property type="protein sequence ID" value="AAQ65095.1"/>
    <property type="molecule type" value="mRNA"/>
</dbReference>
<dbReference type="PIR" id="G96523">
    <property type="entry name" value="G96523"/>
</dbReference>
<dbReference type="RefSeq" id="NP_564525.1">
    <property type="nucleotide sequence ID" value="NM_103733.4"/>
</dbReference>
<dbReference type="SMR" id="Q6R3K4"/>
<dbReference type="BioGRID" id="26482">
    <property type="interactions" value="1"/>
</dbReference>
<dbReference type="FunCoup" id="Q6R3K4">
    <property type="interactions" value="81"/>
</dbReference>
<dbReference type="IntAct" id="Q6R3K4">
    <property type="interactions" value="1"/>
</dbReference>
<dbReference type="STRING" id="3702.Q6R3K4"/>
<dbReference type="iPTMnet" id="Q6R3K4"/>
<dbReference type="PaxDb" id="3702-AT1G48370.1"/>
<dbReference type="ProteomicsDB" id="242972"/>
<dbReference type="EnsemblPlants" id="AT1G48370.1">
    <property type="protein sequence ID" value="AT1G48370.1"/>
    <property type="gene ID" value="AT1G48370"/>
</dbReference>
<dbReference type="GeneID" id="841257"/>
<dbReference type="Gramene" id="AT1G48370.1">
    <property type="protein sequence ID" value="AT1G48370.1"/>
    <property type="gene ID" value="AT1G48370"/>
</dbReference>
<dbReference type="KEGG" id="ath:AT1G48370"/>
<dbReference type="Araport" id="AT1G48370"/>
<dbReference type="TAIR" id="AT1G48370">
    <property type="gene designation" value="YSL8"/>
</dbReference>
<dbReference type="eggNOG" id="ENOG502QUDW">
    <property type="taxonomic scope" value="Eukaryota"/>
</dbReference>
<dbReference type="HOGENOM" id="CLU_015477_2_0_1"/>
<dbReference type="InParanoid" id="Q6R3K4"/>
<dbReference type="OMA" id="PFGIVYR"/>
<dbReference type="PhylomeDB" id="Q6R3K4"/>
<dbReference type="PRO" id="PR:Q6R3K4"/>
<dbReference type="Proteomes" id="UP000006548">
    <property type="component" value="Chromosome 1"/>
</dbReference>
<dbReference type="ExpressionAtlas" id="Q6R3K4">
    <property type="expression patterns" value="baseline and differential"/>
</dbReference>
<dbReference type="GO" id="GO:0016020">
    <property type="term" value="C:membrane"/>
    <property type="evidence" value="ECO:0007669"/>
    <property type="project" value="UniProtKB-SubCell"/>
</dbReference>
<dbReference type="GO" id="GO:0035673">
    <property type="term" value="F:oligopeptide transmembrane transporter activity"/>
    <property type="evidence" value="ECO:0007669"/>
    <property type="project" value="InterPro"/>
</dbReference>
<dbReference type="InterPro" id="IPR004813">
    <property type="entry name" value="OPT"/>
</dbReference>
<dbReference type="InterPro" id="IPR045035">
    <property type="entry name" value="YSL-like"/>
</dbReference>
<dbReference type="NCBIfam" id="TIGR00728">
    <property type="entry name" value="OPT_sfam"/>
    <property type="match status" value="1"/>
</dbReference>
<dbReference type="PANTHER" id="PTHR31645:SF76">
    <property type="entry name" value="METAL-NICOTIANAMINE TRANSPORTER YSL8-RELATED"/>
    <property type="match status" value="1"/>
</dbReference>
<dbReference type="PANTHER" id="PTHR31645">
    <property type="entry name" value="OLIGOPEPTIDE TRANSPORTER YGL114W-RELATED"/>
    <property type="match status" value="1"/>
</dbReference>
<dbReference type="Pfam" id="PF03169">
    <property type="entry name" value="OPT"/>
    <property type="match status" value="1"/>
</dbReference>
<gene>
    <name type="primary">YSL8</name>
    <name type="ordered locus">At1g48370</name>
    <name type="ORF">F11A17.8</name>
    <name type="ORF">F11A17_27</name>
</gene>
<proteinExistence type="evidence at protein level"/>
<protein>
    <recommendedName>
        <fullName>Probable metal-nicotianamine transporter YSL8</fullName>
    </recommendedName>
    <alternativeName>
        <fullName>Protein YELLOW STRIPE LIKE 8</fullName>
        <shortName>AtYSL8</shortName>
    </alternativeName>
</protein>
<organism>
    <name type="scientific">Arabidopsis thaliana</name>
    <name type="common">Mouse-ear cress</name>
    <dbReference type="NCBI Taxonomy" id="3702"/>
    <lineage>
        <taxon>Eukaryota</taxon>
        <taxon>Viridiplantae</taxon>
        <taxon>Streptophyta</taxon>
        <taxon>Embryophyta</taxon>
        <taxon>Tracheophyta</taxon>
        <taxon>Spermatophyta</taxon>
        <taxon>Magnoliopsida</taxon>
        <taxon>eudicotyledons</taxon>
        <taxon>Gunneridae</taxon>
        <taxon>Pentapetalae</taxon>
        <taxon>rosids</taxon>
        <taxon>malvids</taxon>
        <taxon>Brassicales</taxon>
        <taxon>Brassicaceae</taxon>
        <taxon>Camelineae</taxon>
        <taxon>Arabidopsis</taxon>
    </lineage>
</organism>
<comment type="function">
    <text evidence="1">May be involved in the transport of nicotianamine-chelated metals.</text>
</comment>
<comment type="subcellular location">
    <subcellularLocation>
        <location evidence="4">Membrane</location>
        <topology evidence="4">Multi-pass membrane protein</topology>
    </subcellularLocation>
</comment>
<comment type="similarity">
    <text evidence="4">Belongs to the YSL (TC 2.A.67.2) family.</text>
</comment>
<comment type="sequence caution" evidence="4">
    <conflict type="erroneous gene model prediction">
        <sequence resource="EMBL-CDS" id="AAD49762"/>
    </conflict>
</comment>
<accession>Q6R3K4</accession>
<accession>Q94BX5</accession>
<accession>Q9SX70</accession>
<sequence>MRKGGLTPDRDRQIEEHELQETGISPDIERLKRNINATPYQREEEEEDREEQEESVEGIFESREVPSWKKQLTIRAFVVSFALSILFSFIVMKLNLTTGIIPSLNVSAGLLGFFFVKTWTKMLHKSGLLKQPFTRQENTVIQTCVVASSGIAFSGGFGTYLFAMSHRIADQSGDVARGVKDPSLGWMIAFLFVVSFLGLFSVVPLRKIMIIDFKLPYPSGTATAHLINSFHTPQGAKLAKKQVRVLGKFFSFSFFWGFFQWFFTAGENCGFNSFPTFGLRAYQYKFYFDFSATYVGVGMICPYIINISLLLGGILSWGLMWPLIETRKGDWFPSNVDSSSMNGLQAYKVFIAVATILGDGLYNFCKVLIRTFSGLISQIRGKAGSRSSLAHKEDPPASPASPLTPRISYDDQRRTRFFLKDQIPSWFAVGGYVVISAVSTAILPHMFSQLRWYYIIVIYIFAPILAFCNAYGAGLTDWSLASTYGKLAIFTIGAWAGSDHGGLLAGLAACGVMMNIVSTASDLTQDFKTGYLTLSSPRAMFVSQVIGTAMGCLVSPCVFWLFYKAFDDLGLPNSEYPAPFATVYRSMAKLGVEGVSSLPRDCLMLCYVFFGVAILINLIKDCLGNRWGRFVPLPMAMAIPFFLGPYFAIDMCVGSFILFVWERLDAPKAEAFATAVASGLICGDGIWTLPSSVLAIAGVKPPICMKFLSAATNHRVDKFLQGSS</sequence>
<reference key="1">
    <citation type="submission" date="2003-12" db="EMBL/GenBank/DDBJ databases">
        <title>The yellow stripe-like (YSL) family of metal-nicotianamine transporters.</title>
        <authorList>
            <person name="Roberts L.A."/>
            <person name="Walker E.L."/>
        </authorList>
    </citation>
    <scope>NUCLEOTIDE SEQUENCE [MRNA]</scope>
</reference>
<reference key="2">
    <citation type="journal article" date="2000" name="Nature">
        <title>Sequence and analysis of chromosome 1 of the plant Arabidopsis thaliana.</title>
        <authorList>
            <person name="Theologis A."/>
            <person name="Ecker J.R."/>
            <person name="Palm C.J."/>
            <person name="Federspiel N.A."/>
            <person name="Kaul S."/>
            <person name="White O."/>
            <person name="Alonso J."/>
            <person name="Altafi H."/>
            <person name="Araujo R."/>
            <person name="Bowman C.L."/>
            <person name="Brooks S.Y."/>
            <person name="Buehler E."/>
            <person name="Chan A."/>
            <person name="Chao Q."/>
            <person name="Chen H."/>
            <person name="Cheuk R.F."/>
            <person name="Chin C.W."/>
            <person name="Chung M.K."/>
            <person name="Conn L."/>
            <person name="Conway A.B."/>
            <person name="Conway A.R."/>
            <person name="Creasy T.H."/>
            <person name="Dewar K."/>
            <person name="Dunn P."/>
            <person name="Etgu P."/>
            <person name="Feldblyum T.V."/>
            <person name="Feng J.-D."/>
            <person name="Fong B."/>
            <person name="Fujii C.Y."/>
            <person name="Gill J.E."/>
            <person name="Goldsmith A.D."/>
            <person name="Haas B."/>
            <person name="Hansen N.F."/>
            <person name="Hughes B."/>
            <person name="Huizar L."/>
            <person name="Hunter J.L."/>
            <person name="Jenkins J."/>
            <person name="Johnson-Hopson C."/>
            <person name="Khan S."/>
            <person name="Khaykin E."/>
            <person name="Kim C.J."/>
            <person name="Koo H.L."/>
            <person name="Kremenetskaia I."/>
            <person name="Kurtz D.B."/>
            <person name="Kwan A."/>
            <person name="Lam B."/>
            <person name="Langin-Hooper S."/>
            <person name="Lee A."/>
            <person name="Lee J.M."/>
            <person name="Lenz C.A."/>
            <person name="Li J.H."/>
            <person name="Li Y.-P."/>
            <person name="Lin X."/>
            <person name="Liu S.X."/>
            <person name="Liu Z.A."/>
            <person name="Luros J.S."/>
            <person name="Maiti R."/>
            <person name="Marziali A."/>
            <person name="Militscher J."/>
            <person name="Miranda M."/>
            <person name="Nguyen M."/>
            <person name="Nierman W.C."/>
            <person name="Osborne B.I."/>
            <person name="Pai G."/>
            <person name="Peterson J."/>
            <person name="Pham P.K."/>
            <person name="Rizzo M."/>
            <person name="Rooney T."/>
            <person name="Rowley D."/>
            <person name="Sakano H."/>
            <person name="Salzberg S.L."/>
            <person name="Schwartz J.R."/>
            <person name="Shinn P."/>
            <person name="Southwick A.M."/>
            <person name="Sun H."/>
            <person name="Tallon L.J."/>
            <person name="Tambunga G."/>
            <person name="Toriumi M.J."/>
            <person name="Town C.D."/>
            <person name="Utterback T."/>
            <person name="Van Aken S."/>
            <person name="Vaysberg M."/>
            <person name="Vysotskaia V.S."/>
            <person name="Walker M."/>
            <person name="Wu D."/>
            <person name="Yu G."/>
            <person name="Fraser C.M."/>
            <person name="Venter J.C."/>
            <person name="Davis R.W."/>
        </authorList>
    </citation>
    <scope>NUCLEOTIDE SEQUENCE [LARGE SCALE GENOMIC DNA]</scope>
    <source>
        <strain>cv. Columbia</strain>
    </source>
</reference>
<reference key="3">
    <citation type="journal article" date="2017" name="Plant J.">
        <title>Araport11: a complete reannotation of the Arabidopsis thaliana reference genome.</title>
        <authorList>
            <person name="Cheng C.Y."/>
            <person name="Krishnakumar V."/>
            <person name="Chan A.P."/>
            <person name="Thibaud-Nissen F."/>
            <person name="Schobel S."/>
            <person name="Town C.D."/>
        </authorList>
    </citation>
    <scope>GENOME REANNOTATION</scope>
    <source>
        <strain>cv. Columbia</strain>
    </source>
</reference>
<reference key="4">
    <citation type="journal article" date="2003" name="Science">
        <title>Empirical analysis of transcriptional activity in the Arabidopsis genome.</title>
        <authorList>
            <person name="Yamada K."/>
            <person name="Lim J."/>
            <person name="Dale J.M."/>
            <person name="Chen H."/>
            <person name="Shinn P."/>
            <person name="Palm C.J."/>
            <person name="Southwick A.M."/>
            <person name="Wu H.C."/>
            <person name="Kim C.J."/>
            <person name="Nguyen M."/>
            <person name="Pham P.K."/>
            <person name="Cheuk R.F."/>
            <person name="Karlin-Newmann G."/>
            <person name="Liu S.X."/>
            <person name="Lam B."/>
            <person name="Sakano H."/>
            <person name="Wu T."/>
            <person name="Yu G."/>
            <person name="Miranda M."/>
            <person name="Quach H.L."/>
            <person name="Tripp M."/>
            <person name="Chang C.H."/>
            <person name="Lee J.M."/>
            <person name="Toriumi M.J."/>
            <person name="Chan M.M."/>
            <person name="Tang C.C."/>
            <person name="Onodera C.S."/>
            <person name="Deng J.M."/>
            <person name="Akiyama K."/>
            <person name="Ansari Y."/>
            <person name="Arakawa T."/>
            <person name="Banh J."/>
            <person name="Banno F."/>
            <person name="Bowser L."/>
            <person name="Brooks S.Y."/>
            <person name="Carninci P."/>
            <person name="Chao Q."/>
            <person name="Choy N."/>
            <person name="Enju A."/>
            <person name="Goldsmith A.D."/>
            <person name="Gurjal M."/>
            <person name="Hansen N.F."/>
            <person name="Hayashizaki Y."/>
            <person name="Johnson-Hopson C."/>
            <person name="Hsuan V.W."/>
            <person name="Iida K."/>
            <person name="Karnes M."/>
            <person name="Khan S."/>
            <person name="Koesema E."/>
            <person name="Ishida J."/>
            <person name="Jiang P.X."/>
            <person name="Jones T."/>
            <person name="Kawai J."/>
            <person name="Kamiya A."/>
            <person name="Meyers C."/>
            <person name="Nakajima M."/>
            <person name="Narusaka M."/>
            <person name="Seki M."/>
            <person name="Sakurai T."/>
            <person name="Satou M."/>
            <person name="Tamse R."/>
            <person name="Vaysberg M."/>
            <person name="Wallender E.K."/>
            <person name="Wong C."/>
            <person name="Yamamura Y."/>
            <person name="Yuan S."/>
            <person name="Shinozaki K."/>
            <person name="Davis R.W."/>
            <person name="Theologis A."/>
            <person name="Ecker J.R."/>
        </authorList>
    </citation>
    <scope>NUCLEOTIDE SEQUENCE [LARGE SCALE MRNA]</scope>
    <source>
        <strain>cv. Columbia</strain>
    </source>
</reference>
<reference key="5">
    <citation type="journal article" date="2007" name="Biochem. Biophys. Res. Commun.">
        <title>Novel subsets of the Arabidopsis plasmalemma phosphoproteome identify phosphorylation sites in secondary active transporters.</title>
        <authorList>
            <person name="Hem S."/>
            <person name="Rofidal V."/>
            <person name="Sommerer N."/>
            <person name="Rossignol M."/>
        </authorList>
    </citation>
    <scope>PHOSPHORYLATION [LARGE SCALE ANALYSIS] AT SER-25</scope>
    <scope>IDENTIFICATION BY MASS SPECTROMETRY [LARGE SCALE ANALYSIS]</scope>
</reference>
<evidence type="ECO:0000250" key="1"/>
<evidence type="ECO:0000255" key="2"/>
<evidence type="ECO:0000256" key="3">
    <source>
        <dbReference type="SAM" id="MobiDB-lite"/>
    </source>
</evidence>
<evidence type="ECO:0000305" key="4"/>
<evidence type="ECO:0007744" key="5">
    <source>
    </source>
</evidence>
<keyword id="KW-0472">Membrane</keyword>
<keyword id="KW-0597">Phosphoprotein</keyword>
<keyword id="KW-1185">Reference proteome</keyword>
<keyword id="KW-0812">Transmembrane</keyword>
<keyword id="KW-1133">Transmembrane helix</keyword>
<keyword id="KW-0813">Transport</keyword>
<name>YSL8_ARATH</name>
<feature type="chain" id="PRO_0000311419" description="Probable metal-nicotianamine transporter YSL8">
    <location>
        <begin position="1"/>
        <end position="724"/>
    </location>
</feature>
<feature type="transmembrane region" description="Helical" evidence="2">
    <location>
        <begin position="72"/>
        <end position="92"/>
    </location>
</feature>
<feature type="transmembrane region" description="Helical" evidence="2">
    <location>
        <begin position="96"/>
        <end position="116"/>
    </location>
</feature>
<feature type="transmembrane region" description="Helical" evidence="2">
    <location>
        <begin position="144"/>
        <end position="164"/>
    </location>
</feature>
<feature type="transmembrane region" description="Helical" evidence="2">
    <location>
        <begin position="184"/>
        <end position="204"/>
    </location>
</feature>
<feature type="transmembrane region" description="Helical" evidence="2">
    <location>
        <begin position="245"/>
        <end position="265"/>
    </location>
</feature>
<feature type="transmembrane region" description="Helical" evidence="2">
    <location>
        <begin position="304"/>
        <end position="324"/>
    </location>
</feature>
<feature type="transmembrane region" description="Helical" evidence="2">
    <location>
        <begin position="349"/>
        <end position="369"/>
    </location>
</feature>
<feature type="transmembrane region" description="Helical" evidence="2">
    <location>
        <begin position="423"/>
        <end position="443"/>
    </location>
</feature>
<feature type="transmembrane region" description="Helical" evidence="2">
    <location>
        <begin position="455"/>
        <end position="475"/>
    </location>
</feature>
<feature type="transmembrane region" description="Helical" evidence="2">
    <location>
        <begin position="478"/>
        <end position="497"/>
    </location>
</feature>
<feature type="transmembrane region" description="Helical" evidence="2">
    <location>
        <begin position="501"/>
        <end position="520"/>
    </location>
</feature>
<feature type="transmembrane region" description="Helical" evidence="2">
    <location>
        <begin position="541"/>
        <end position="561"/>
    </location>
</feature>
<feature type="transmembrane region" description="Helical" evidence="2">
    <location>
        <begin position="603"/>
        <end position="623"/>
    </location>
</feature>
<feature type="transmembrane region" description="Helical" evidence="2">
    <location>
        <begin position="641"/>
        <end position="661"/>
    </location>
</feature>
<feature type="transmembrane region" description="Helical" evidence="2">
    <location>
        <begin position="679"/>
        <end position="699"/>
    </location>
</feature>
<feature type="region of interest" description="Disordered" evidence="3">
    <location>
        <begin position="1"/>
        <end position="58"/>
    </location>
</feature>
<feature type="region of interest" description="Disordered" evidence="3">
    <location>
        <begin position="386"/>
        <end position="407"/>
    </location>
</feature>
<feature type="compositionally biased region" description="Basic and acidic residues" evidence="3">
    <location>
        <begin position="8"/>
        <end position="20"/>
    </location>
</feature>
<feature type="compositionally biased region" description="Acidic residues" evidence="3">
    <location>
        <begin position="43"/>
        <end position="56"/>
    </location>
</feature>
<feature type="modified residue" description="Phosphoserine" evidence="5">
    <location>
        <position position="25"/>
    </location>
</feature>
<feature type="sequence conflict" description="In Ref. 1; AAS00697." evidence="4" ref="1">
    <original>I</original>
    <variation>V</variation>
    <location>
        <position position="90"/>
    </location>
</feature>
<feature type="sequence conflict" description="In Ref. 1; AAS00697." evidence="4" ref="1">
    <original>K</original>
    <variation>E</variation>
    <location>
        <position position="117"/>
    </location>
</feature>
<feature type="sequence conflict" description="In Ref. 1; AAS00697." evidence="4" ref="1">
    <original>A</original>
    <variation>V</variation>
    <location>
        <position position="494"/>
    </location>
</feature>